<keyword id="KW-0223">Dioxygenase</keyword>
<keyword id="KW-0408">Iron</keyword>
<keyword id="KW-0479">Metal-binding</keyword>
<keyword id="KW-0560">Oxidoreductase</keyword>
<protein>
    <recommendedName>
        <fullName evidence="1">Glutarate 2-hydroxylase</fullName>
        <shortName evidence="1">G-2-H</shortName>
        <ecNumber evidence="1">1.14.11.64</ecNumber>
    </recommendedName>
</protein>
<proteinExistence type="inferred from homology"/>
<accession>B1LPD2</accession>
<dbReference type="EC" id="1.14.11.64" evidence="1"/>
<dbReference type="EMBL" id="CP000970">
    <property type="protein sequence ID" value="ACB18599.1"/>
    <property type="molecule type" value="Genomic_DNA"/>
</dbReference>
<dbReference type="RefSeq" id="WP_000993114.1">
    <property type="nucleotide sequence ID" value="NC_010498.1"/>
</dbReference>
<dbReference type="SMR" id="B1LPD2"/>
<dbReference type="KEGG" id="ecm:EcSMS35_2779"/>
<dbReference type="HOGENOM" id="CLU_075277_0_0_6"/>
<dbReference type="Proteomes" id="UP000007011">
    <property type="component" value="Chromosome"/>
</dbReference>
<dbReference type="GO" id="GO:0008198">
    <property type="term" value="F:ferrous iron binding"/>
    <property type="evidence" value="ECO:0007669"/>
    <property type="project" value="UniProtKB-UniRule"/>
</dbReference>
<dbReference type="GO" id="GO:0106343">
    <property type="term" value="F:glutarate dioxygenase activity"/>
    <property type="evidence" value="ECO:0007669"/>
    <property type="project" value="UniProtKB-EC"/>
</dbReference>
<dbReference type="GO" id="GO:0050498">
    <property type="term" value="F:oxidoreductase activity, acting on paired donors, with incorporation or reduction of molecular oxygen, with 2-oxoglutarate as one donor, and the other dehydrogenated"/>
    <property type="evidence" value="ECO:0007669"/>
    <property type="project" value="UniProtKB-UniRule"/>
</dbReference>
<dbReference type="GO" id="GO:0019477">
    <property type="term" value="P:L-lysine catabolic process"/>
    <property type="evidence" value="ECO:0007669"/>
    <property type="project" value="UniProtKB-UniRule"/>
</dbReference>
<dbReference type="CDD" id="cd00250">
    <property type="entry name" value="CAS_like"/>
    <property type="match status" value="1"/>
</dbReference>
<dbReference type="FunFam" id="3.60.130.10:FF:000004">
    <property type="entry name" value="Glutarate 2-hydroxylase"/>
    <property type="match status" value="1"/>
</dbReference>
<dbReference type="Gene3D" id="3.60.130.10">
    <property type="entry name" value="Clavaminate synthase-like"/>
    <property type="match status" value="1"/>
</dbReference>
<dbReference type="HAMAP" id="MF_01083">
    <property type="entry name" value="glutarate_hydroxylase"/>
    <property type="match status" value="1"/>
</dbReference>
<dbReference type="InterPro" id="IPR015038">
    <property type="entry name" value="GlaH"/>
</dbReference>
<dbReference type="InterPro" id="IPR042098">
    <property type="entry name" value="TauD-like_sf"/>
</dbReference>
<dbReference type="NCBIfam" id="NF002814">
    <property type="entry name" value="PRK02963.1"/>
    <property type="match status" value="1"/>
</dbReference>
<dbReference type="Pfam" id="PF08943">
    <property type="entry name" value="CsiD"/>
    <property type="match status" value="1"/>
</dbReference>
<dbReference type="SUPFAM" id="SSF51197">
    <property type="entry name" value="Clavaminate synthase-like"/>
    <property type="match status" value="1"/>
</dbReference>
<gene>
    <name evidence="1" type="primary">glaH</name>
    <name type="ordered locus">EcSMS35_2779</name>
</gene>
<evidence type="ECO:0000255" key="1">
    <source>
        <dbReference type="HAMAP-Rule" id="MF_01083"/>
    </source>
</evidence>
<feature type="chain" id="PRO_1000136869" description="Glutarate 2-hydroxylase">
    <location>
        <begin position="1"/>
        <end position="325"/>
    </location>
</feature>
<feature type="binding site" evidence="1">
    <location>
        <position position="160"/>
    </location>
    <ligand>
        <name>Fe cation</name>
        <dbReference type="ChEBI" id="CHEBI:24875"/>
    </ligand>
</feature>
<feature type="binding site" evidence="1">
    <location>
        <position position="162"/>
    </location>
    <ligand>
        <name>Fe cation</name>
        <dbReference type="ChEBI" id="CHEBI:24875"/>
    </ligand>
</feature>
<feature type="binding site" evidence="1">
    <location>
        <position position="292"/>
    </location>
    <ligand>
        <name>Fe cation</name>
        <dbReference type="ChEBI" id="CHEBI:24875"/>
    </ligand>
</feature>
<sequence length="325" mass="37396">MNALTAVQNNAVDSGQDYSGFTLIPSAQSPRLLELTFTEQTTKQFLEQVAEWPVQALEYKSFLRFRVGKILDDLCANQLQPLLLKTLLNRAEGALLINAVGVDDVKQADEMVKLATAVAHLIGRSNFDAMSGQYYARFVVKNVDNSDSYLRQPHRVMELHNDGTYVEEITDYVLMMKIDEQNMQGGNSLLLHLDDWEHLDHYFRHPLARRPMRFAAPPSKNVSKDVFHPVFDVDQQGRPVMRYIDQFVQPKDFEEGVWLSELSDAIETSKGILSVPVPVGKFLLINNLFWLHGRDRFTPHPDLRRELMRQRGYFAYATNHYQTHQ</sequence>
<reference key="1">
    <citation type="journal article" date="2008" name="J. Bacteriol.">
        <title>Insights into the environmental resistance gene pool from the genome sequence of the multidrug-resistant environmental isolate Escherichia coli SMS-3-5.</title>
        <authorList>
            <person name="Fricke W.F."/>
            <person name="Wright M.S."/>
            <person name="Lindell A.H."/>
            <person name="Harkins D.M."/>
            <person name="Baker-Austin C."/>
            <person name="Ravel J."/>
            <person name="Stepanauskas R."/>
        </authorList>
    </citation>
    <scope>NUCLEOTIDE SEQUENCE [LARGE SCALE GENOMIC DNA]</scope>
    <source>
        <strain>SMS-3-5 / SECEC</strain>
    </source>
</reference>
<comment type="function">
    <text evidence="1">Acts as an alpha-ketoglutarate-dependent dioxygenase catalyzing hydroxylation of glutarate (GA) to L-2-hydroxyglutarate (L2HG). Functions in a L-lysine degradation pathway that proceeds via cadaverine, glutarate and L-2-hydroxyglutarate.</text>
</comment>
<comment type="catalytic activity">
    <reaction evidence="1">
        <text>glutarate + 2-oxoglutarate + O2 = (S)-2-hydroxyglutarate + succinate + CO2</text>
        <dbReference type="Rhea" id="RHEA:13821"/>
        <dbReference type="ChEBI" id="CHEBI:15379"/>
        <dbReference type="ChEBI" id="CHEBI:16526"/>
        <dbReference type="ChEBI" id="CHEBI:16782"/>
        <dbReference type="ChEBI" id="CHEBI:16810"/>
        <dbReference type="ChEBI" id="CHEBI:30031"/>
        <dbReference type="ChEBI" id="CHEBI:30921"/>
        <dbReference type="EC" id="1.14.11.64"/>
    </reaction>
    <physiologicalReaction direction="left-to-right" evidence="1">
        <dbReference type="Rhea" id="RHEA:13822"/>
    </physiologicalReaction>
</comment>
<comment type="cofactor">
    <cofactor evidence="1">
        <name>Fe(2+)</name>
        <dbReference type="ChEBI" id="CHEBI:29033"/>
    </cofactor>
    <text evidence="1">Binds 1 Fe(2+) ion per subunit.</text>
</comment>
<comment type="pathway">
    <text evidence="1">Amino-acid degradation.</text>
</comment>
<comment type="subunit">
    <text evidence="1">Homotetramer.</text>
</comment>
<comment type="similarity">
    <text evidence="1">Belongs to the glutarate hydroxylase family.</text>
</comment>
<name>GLAH_ECOSM</name>
<organism>
    <name type="scientific">Escherichia coli (strain SMS-3-5 / SECEC)</name>
    <dbReference type="NCBI Taxonomy" id="439855"/>
    <lineage>
        <taxon>Bacteria</taxon>
        <taxon>Pseudomonadati</taxon>
        <taxon>Pseudomonadota</taxon>
        <taxon>Gammaproteobacteria</taxon>
        <taxon>Enterobacterales</taxon>
        <taxon>Enterobacteriaceae</taxon>
        <taxon>Escherichia</taxon>
    </lineage>
</organism>